<protein>
    <recommendedName>
        <fullName>Ras association domain-containing protein 5</fullName>
    </recommendedName>
    <alternativeName>
        <fullName>New ras effector 1</fullName>
    </alternativeName>
    <alternativeName>
        <fullName>Regulator for cell adhesion and polarization enriched in lymphoid tissues</fullName>
        <shortName>RAPL</shortName>
    </alternativeName>
</protein>
<accession>Q5EBH1</accession>
<accession>O70407</accession>
<accession>Q6KAR0</accession>
<accession>Q8C2E8</accession>
<feature type="chain" id="PRO_0000240402" description="Ras association domain-containing protein 5">
    <location>
        <begin position="1"/>
        <end position="413"/>
    </location>
</feature>
<feature type="domain" description="Ras-associating" evidence="3">
    <location>
        <begin position="265"/>
        <end position="359"/>
    </location>
</feature>
<feature type="domain" description="SARAH" evidence="5">
    <location>
        <begin position="361"/>
        <end position="408"/>
    </location>
</feature>
<feature type="zinc finger region" description="Phorbol-ester/DAG-type" evidence="4">
    <location>
        <begin position="117"/>
        <end position="165"/>
    </location>
</feature>
<feature type="region of interest" description="Disordered" evidence="6">
    <location>
        <begin position="1"/>
        <end position="103"/>
    </location>
</feature>
<feature type="compositionally biased region" description="Basic and acidic residues" evidence="6">
    <location>
        <begin position="52"/>
        <end position="74"/>
    </location>
</feature>
<feature type="modified residue" description="Phosphoserine" evidence="15">
    <location>
        <position position="177"/>
    </location>
</feature>
<feature type="modified residue" description="Phosphoserine" evidence="2">
    <location>
        <position position="274"/>
    </location>
</feature>
<feature type="modified residue" description="Phosphothreonine" evidence="2">
    <location>
        <position position="347"/>
    </location>
</feature>
<feature type="splice variant" id="VSP_019368" description="In isoform 2." evidence="11 12 13">
    <location>
        <begin position="1"/>
        <end position="142"/>
    </location>
</feature>
<feature type="splice variant" id="VSP_019369" description="In isoform 2." evidence="11 12 13">
    <original>ALRCANCKFTCHSECRSLIQLDCRQKGGPALDRRSPESTLTPTLNQ</original>
    <variation>MTVDSSMSSGYCSLDEELEDCFFTAKTTFFRNLQSKQPSK</variation>
    <location>
        <begin position="143"/>
        <end position="188"/>
    </location>
</feature>
<feature type="mutagenesis site" description="Reduced interaction with HRAS." evidence="9">
    <original>C</original>
    <variation>A</variation>
    <location>
        <position position="220"/>
    </location>
</feature>
<feature type="mutagenesis site" description="Strongly reduced interaction with HRAS." evidence="9">
    <original>C</original>
    <variation>D</variation>
    <location>
        <position position="220"/>
    </location>
</feature>
<feature type="mutagenesis site" description="Strongly reduced interaction with HRAS." evidence="9">
    <original>L</original>
    <variation>A</variation>
    <variation>D</variation>
    <location>
        <position position="221"/>
    </location>
</feature>
<feature type="mutagenesis site" description="Reduced interaction with HRAS." evidence="9">
    <original>F</original>
    <variation>A</variation>
    <location>
        <position position="234"/>
    </location>
</feature>
<feature type="mutagenesis site" description="Reduced interaction with HRAS." evidence="9">
    <original>K</original>
    <variation>A</variation>
    <location>
        <position position="236"/>
    </location>
</feature>
<feature type="mutagenesis site" description="Reduced interaction with HRAS." evidence="9">
    <original>D</original>
    <variation>A</variation>
    <location>
        <position position="280"/>
    </location>
</feature>
<feature type="mutagenesis site" description="Very strong reduction of the interaction with HRAS." evidence="9">
    <original>K</original>
    <variation>A</variation>
    <location>
        <position position="283"/>
    </location>
</feature>
<feature type="mutagenesis site" description="Reduced interaction with HRAS." evidence="9">
    <original>Q</original>
    <variation>A</variation>
    <location>
        <position position="284"/>
    </location>
</feature>
<feature type="mutagenesis site" description="Reduced specificity for HRAS and diminished discrimination between HRAS and RAP1A." evidence="9">
    <original>K</original>
    <variation>D</variation>
    <location>
        <position position="302"/>
    </location>
</feature>
<feature type="mutagenesis site" description="Strongly reduced interaction with HRAS." evidence="9">
    <original>K</original>
    <variation>A</variation>
    <location>
        <position position="303"/>
    </location>
</feature>
<feature type="sequence conflict" description="In Ref. 1; AAC08580." evidence="14" ref="1">
    <original>E</original>
    <variation>G</variation>
    <location>
        <position position="179"/>
    </location>
</feature>
<feature type="sequence conflict" description="In Ref. 1; AAC08580." evidence="14" ref="1">
    <original>IRPQSIY</original>
    <variation>SGPSPSM</variation>
    <location>
        <begin position="251"/>
        <end position="257"/>
    </location>
</feature>
<feature type="helix" evidence="17">
    <location>
        <begin position="112"/>
        <end position="114"/>
    </location>
</feature>
<feature type="turn" evidence="16">
    <location>
        <begin position="133"/>
        <end position="135"/>
    </location>
</feature>
<feature type="strand" evidence="16">
    <location>
        <begin position="137"/>
        <end position="139"/>
    </location>
</feature>
<feature type="turn" evidence="16">
    <location>
        <begin position="147"/>
        <end position="149"/>
    </location>
</feature>
<feature type="helix" evidence="16">
    <location>
        <begin position="155"/>
        <end position="158"/>
    </location>
</feature>
<feature type="helix" evidence="19">
    <location>
        <begin position="203"/>
        <end position="215"/>
    </location>
</feature>
<feature type="helix" evidence="19">
    <location>
        <begin position="219"/>
        <end position="221"/>
    </location>
</feature>
<feature type="helix" evidence="19">
    <location>
        <begin position="227"/>
        <end position="229"/>
    </location>
</feature>
<feature type="strand" evidence="19">
    <location>
        <begin position="231"/>
        <end position="245"/>
    </location>
</feature>
<feature type="strand" evidence="19">
    <location>
        <begin position="275"/>
        <end position="288"/>
    </location>
</feature>
<feature type="helix" evidence="19">
    <location>
        <begin position="293"/>
        <end position="303"/>
    </location>
</feature>
<feature type="helix" evidence="19">
    <location>
        <begin position="310"/>
        <end position="312"/>
    </location>
</feature>
<feature type="strand" evidence="19">
    <location>
        <begin position="313"/>
        <end position="321"/>
    </location>
</feature>
<feature type="strand" evidence="19">
    <location>
        <begin position="324"/>
        <end position="329"/>
    </location>
</feature>
<feature type="helix" evidence="19">
    <location>
        <begin position="336"/>
        <end position="343"/>
    </location>
</feature>
<feature type="turn" evidence="19">
    <location>
        <begin position="347"/>
        <end position="349"/>
    </location>
</feature>
<feature type="strand" evidence="19">
    <location>
        <begin position="351"/>
        <end position="356"/>
    </location>
</feature>
<feature type="helix" evidence="18">
    <location>
        <begin position="370"/>
        <end position="405"/>
    </location>
</feature>
<reference key="1">
    <citation type="journal article" date="1998" name="J. Biol. Chem.">
        <title>Identification of Nore1 as a potential Ras effector.</title>
        <authorList>
            <person name="Vavvas D."/>
            <person name="Li X."/>
            <person name="Avruch J."/>
            <person name="Zhang X.F."/>
        </authorList>
    </citation>
    <scope>NUCLEOTIDE SEQUENCE [MRNA] (ISOFORM 1)</scope>
    <scope>INTERACTION WITH HRAS</scope>
    <source>
        <strain>BALB/cJ</strain>
        <tissue>Brain</tissue>
    </source>
</reference>
<reference key="2">
    <citation type="journal article" date="2003" name="Nat. Immunol.">
        <title>RAPL, a Rap1-binding molecule that mediates Rap1-induced adhesion through spatial regulation of LFA-1.</title>
        <authorList>
            <person name="Katagiri K."/>
            <person name="Maeda A."/>
            <person name="Shimonaka M."/>
            <person name="Kinashi T."/>
        </authorList>
    </citation>
    <scope>NUCLEOTIDE SEQUENCE [MRNA] (ISOFORM 2)</scope>
    <source>
        <strain>BALB/cJ</strain>
        <tissue>Spleen</tissue>
    </source>
</reference>
<reference key="3">
    <citation type="journal article" date="2004" name="DNA Res.">
        <title>Prediction of the coding sequences of mouse homologues of FLJ genes: the complete nucleotide sequences of 110 mouse FLJ-homologous cDNAs identified by screening of terminal sequences of cDNA clones randomly sampled from size-fractionated libraries.</title>
        <authorList>
            <person name="Okazaki N."/>
            <person name="Kikuno R."/>
            <person name="Ohara R."/>
            <person name="Inamoto S."/>
            <person name="Koseki H."/>
            <person name="Hiraoka S."/>
            <person name="Saga Y."/>
            <person name="Kitamura H."/>
            <person name="Nakagawa T."/>
            <person name="Nagase T."/>
            <person name="Ohara O."/>
            <person name="Koga H."/>
        </authorList>
    </citation>
    <scope>NUCLEOTIDE SEQUENCE [LARGE SCALE MRNA] (ISOFORM 2)</scope>
    <source>
        <tissue>Natural killer cell</tissue>
    </source>
</reference>
<reference key="4">
    <citation type="journal article" date="2005" name="Science">
        <title>The transcriptional landscape of the mammalian genome.</title>
        <authorList>
            <person name="Carninci P."/>
            <person name="Kasukawa T."/>
            <person name="Katayama S."/>
            <person name="Gough J."/>
            <person name="Frith M.C."/>
            <person name="Maeda N."/>
            <person name="Oyama R."/>
            <person name="Ravasi T."/>
            <person name="Lenhard B."/>
            <person name="Wells C."/>
            <person name="Kodzius R."/>
            <person name="Shimokawa K."/>
            <person name="Bajic V.B."/>
            <person name="Brenner S.E."/>
            <person name="Batalov S."/>
            <person name="Forrest A.R."/>
            <person name="Zavolan M."/>
            <person name="Davis M.J."/>
            <person name="Wilming L.G."/>
            <person name="Aidinis V."/>
            <person name="Allen J.E."/>
            <person name="Ambesi-Impiombato A."/>
            <person name="Apweiler R."/>
            <person name="Aturaliya R.N."/>
            <person name="Bailey T.L."/>
            <person name="Bansal M."/>
            <person name="Baxter L."/>
            <person name="Beisel K.W."/>
            <person name="Bersano T."/>
            <person name="Bono H."/>
            <person name="Chalk A.M."/>
            <person name="Chiu K.P."/>
            <person name="Choudhary V."/>
            <person name="Christoffels A."/>
            <person name="Clutterbuck D.R."/>
            <person name="Crowe M.L."/>
            <person name="Dalla E."/>
            <person name="Dalrymple B.P."/>
            <person name="de Bono B."/>
            <person name="Della Gatta G."/>
            <person name="di Bernardo D."/>
            <person name="Down T."/>
            <person name="Engstrom P."/>
            <person name="Fagiolini M."/>
            <person name="Faulkner G."/>
            <person name="Fletcher C.F."/>
            <person name="Fukushima T."/>
            <person name="Furuno M."/>
            <person name="Futaki S."/>
            <person name="Gariboldi M."/>
            <person name="Georgii-Hemming P."/>
            <person name="Gingeras T.R."/>
            <person name="Gojobori T."/>
            <person name="Green R.E."/>
            <person name="Gustincich S."/>
            <person name="Harbers M."/>
            <person name="Hayashi Y."/>
            <person name="Hensch T.K."/>
            <person name="Hirokawa N."/>
            <person name="Hill D."/>
            <person name="Huminiecki L."/>
            <person name="Iacono M."/>
            <person name="Ikeo K."/>
            <person name="Iwama A."/>
            <person name="Ishikawa T."/>
            <person name="Jakt M."/>
            <person name="Kanapin A."/>
            <person name="Katoh M."/>
            <person name="Kawasawa Y."/>
            <person name="Kelso J."/>
            <person name="Kitamura H."/>
            <person name="Kitano H."/>
            <person name="Kollias G."/>
            <person name="Krishnan S.P."/>
            <person name="Kruger A."/>
            <person name="Kummerfeld S.K."/>
            <person name="Kurochkin I.V."/>
            <person name="Lareau L.F."/>
            <person name="Lazarevic D."/>
            <person name="Lipovich L."/>
            <person name="Liu J."/>
            <person name="Liuni S."/>
            <person name="McWilliam S."/>
            <person name="Madan Babu M."/>
            <person name="Madera M."/>
            <person name="Marchionni L."/>
            <person name="Matsuda H."/>
            <person name="Matsuzawa S."/>
            <person name="Miki H."/>
            <person name="Mignone F."/>
            <person name="Miyake S."/>
            <person name="Morris K."/>
            <person name="Mottagui-Tabar S."/>
            <person name="Mulder N."/>
            <person name="Nakano N."/>
            <person name="Nakauchi H."/>
            <person name="Ng P."/>
            <person name="Nilsson R."/>
            <person name="Nishiguchi S."/>
            <person name="Nishikawa S."/>
            <person name="Nori F."/>
            <person name="Ohara O."/>
            <person name="Okazaki Y."/>
            <person name="Orlando V."/>
            <person name="Pang K.C."/>
            <person name="Pavan W.J."/>
            <person name="Pavesi G."/>
            <person name="Pesole G."/>
            <person name="Petrovsky N."/>
            <person name="Piazza S."/>
            <person name="Reed J."/>
            <person name="Reid J.F."/>
            <person name="Ring B.Z."/>
            <person name="Ringwald M."/>
            <person name="Rost B."/>
            <person name="Ruan Y."/>
            <person name="Salzberg S.L."/>
            <person name="Sandelin A."/>
            <person name="Schneider C."/>
            <person name="Schoenbach C."/>
            <person name="Sekiguchi K."/>
            <person name="Semple C.A."/>
            <person name="Seno S."/>
            <person name="Sessa L."/>
            <person name="Sheng Y."/>
            <person name="Shibata Y."/>
            <person name="Shimada H."/>
            <person name="Shimada K."/>
            <person name="Silva D."/>
            <person name="Sinclair B."/>
            <person name="Sperling S."/>
            <person name="Stupka E."/>
            <person name="Sugiura K."/>
            <person name="Sultana R."/>
            <person name="Takenaka Y."/>
            <person name="Taki K."/>
            <person name="Tammoja K."/>
            <person name="Tan S.L."/>
            <person name="Tang S."/>
            <person name="Taylor M.S."/>
            <person name="Tegner J."/>
            <person name="Teichmann S.A."/>
            <person name="Ueda H.R."/>
            <person name="van Nimwegen E."/>
            <person name="Verardo R."/>
            <person name="Wei C.L."/>
            <person name="Yagi K."/>
            <person name="Yamanishi H."/>
            <person name="Zabarovsky E."/>
            <person name="Zhu S."/>
            <person name="Zimmer A."/>
            <person name="Hide W."/>
            <person name="Bult C."/>
            <person name="Grimmond S.M."/>
            <person name="Teasdale R.D."/>
            <person name="Liu E.T."/>
            <person name="Brusic V."/>
            <person name="Quackenbush J."/>
            <person name="Wahlestedt C."/>
            <person name="Mattick J.S."/>
            <person name="Hume D.A."/>
            <person name="Kai C."/>
            <person name="Sasaki D."/>
            <person name="Tomaru Y."/>
            <person name="Fukuda S."/>
            <person name="Kanamori-Katayama M."/>
            <person name="Suzuki M."/>
            <person name="Aoki J."/>
            <person name="Arakawa T."/>
            <person name="Iida J."/>
            <person name="Imamura K."/>
            <person name="Itoh M."/>
            <person name="Kato T."/>
            <person name="Kawaji H."/>
            <person name="Kawagashira N."/>
            <person name="Kawashima T."/>
            <person name="Kojima M."/>
            <person name="Kondo S."/>
            <person name="Konno H."/>
            <person name="Nakano K."/>
            <person name="Ninomiya N."/>
            <person name="Nishio T."/>
            <person name="Okada M."/>
            <person name="Plessy C."/>
            <person name="Shibata K."/>
            <person name="Shiraki T."/>
            <person name="Suzuki S."/>
            <person name="Tagami M."/>
            <person name="Waki K."/>
            <person name="Watahiki A."/>
            <person name="Okamura-Oho Y."/>
            <person name="Suzuki H."/>
            <person name="Kawai J."/>
            <person name="Hayashizaki Y."/>
        </authorList>
    </citation>
    <scope>NUCLEOTIDE SEQUENCE [LARGE SCALE MRNA] (ISOFORMS 1 AND 2)</scope>
    <source>
        <strain>C57BL/6J</strain>
        <strain>NOD</strain>
        <tissue>Thymus</tissue>
    </source>
</reference>
<reference key="5">
    <citation type="journal article" date="2004" name="Genome Res.">
        <title>The status, quality, and expansion of the NIH full-length cDNA project: the Mammalian Gene Collection (MGC).</title>
        <authorList>
            <consortium name="The MGC Project Team"/>
        </authorList>
    </citation>
    <scope>NUCLEOTIDE SEQUENCE [LARGE SCALE MRNA] (ISOFORM 1)</scope>
    <source>
        <tissue>Kidney</tissue>
    </source>
</reference>
<reference key="6">
    <citation type="journal article" date="2002" name="Curr. Biol.">
        <title>Identification of a novel Ras-regulated proapoptotic pathway.</title>
        <authorList>
            <person name="Khokhlatchev A."/>
            <person name="Rabizadeh S."/>
            <person name="Xavier R."/>
            <person name="Nedwidek M."/>
            <person name="Chen T."/>
            <person name="Zhang X.F."/>
            <person name="Seed B."/>
            <person name="Avruch J."/>
        </authorList>
    </citation>
    <scope>FUNCTION IN APOPTOSIS</scope>
    <scope>INTERACTION WITH STK4/MST1; HRAS AND KRAS</scope>
</reference>
<reference key="7">
    <citation type="journal article" date="2002" name="Oncogene">
        <title>The putative tumor suppressor RASSF1A homodimerizes and heterodimerizes with the Ras-GTP binding protein Nore1.</title>
        <authorList>
            <person name="Ortiz-Vega S."/>
            <person name="Khokhlatchev A."/>
            <person name="Nedwidek M."/>
            <person name="Zhang X.F."/>
            <person name="Dammann R."/>
            <person name="Pfeifer G.P."/>
            <person name="Avruch J."/>
        </authorList>
    </citation>
    <scope>SELF-ASSOCIATION</scope>
    <scope>INTERACTION WITH RSSF1; HRAS; KRAS; RRAS; RRAS2; MRAS; RAP1B; RAP2A AND RALA</scope>
</reference>
<reference key="8">
    <citation type="journal article" date="2002" name="Oncogene">
        <authorList>
            <person name="Ortiz-Vega S."/>
            <person name="Khokhlatchev A."/>
            <person name="Nedwidek M."/>
            <person name="Zhang X.F."/>
            <person name="Dammann R."/>
            <person name="Pfeifer G.P."/>
            <person name="Avruch J."/>
        </authorList>
    </citation>
    <scope>ERRATUM OF PUBMED:11857081</scope>
</reference>
<reference key="9">
    <citation type="journal article" date="2010" name="Cell">
        <title>A tissue-specific atlas of mouse protein phosphorylation and expression.</title>
        <authorList>
            <person name="Huttlin E.L."/>
            <person name="Jedrychowski M.P."/>
            <person name="Elias J.E."/>
            <person name="Goswami T."/>
            <person name="Rad R."/>
            <person name="Beausoleil S.A."/>
            <person name="Villen J."/>
            <person name="Haas W."/>
            <person name="Sowa M.E."/>
            <person name="Gygi S.P."/>
        </authorList>
    </citation>
    <scope>PHOSPHORYLATION [LARGE SCALE ANALYSIS] AT SER-177</scope>
    <scope>IDENTIFICATION BY MASS SPECTROMETRY [LARGE SCALE ANALYSIS]</scope>
    <source>
        <tissue>Brain</tissue>
        <tissue>Kidney</tissue>
        <tissue>Lung</tissue>
        <tissue>Spleen</tissue>
        <tissue>Testis</tissue>
    </source>
</reference>
<reference key="10">
    <citation type="journal article" date="2006" name="Structure">
        <title>GTP-Ras disrupts the intramolecular complex of C1 and RA domains of Nore1.</title>
        <authorList>
            <person name="Harjes E."/>
            <person name="Harjes S."/>
            <person name="Wohlgemuth S."/>
            <person name="Mueller K.H."/>
            <person name="Krieger E."/>
            <person name="Herrmann C."/>
            <person name="Bayer P."/>
        </authorList>
    </citation>
    <scope>STRUCTURE BY NMR OF 95-166</scope>
    <scope>SUBUNIT</scope>
</reference>
<reference key="11">
    <citation type="journal article" date="2008" name="EMBO J.">
        <title>Novel type of Ras effector interaction established between tumour suppressor NORE1A and Ras switch II.</title>
        <authorList>
            <person name="Stieglitz B."/>
            <person name="Bee C."/>
            <person name="Schwarz D."/>
            <person name="Yildiz O."/>
            <person name="Moshnikova A."/>
            <person name="Khokhlatchev A."/>
            <person name="Herrmann C."/>
        </authorList>
    </citation>
    <scope>X-RAY CRYSTALLOGRAPHY (1.8 ANGSTROMS) OF 200-357 OF MUTANT ASP-302 IN COMPLEX WITH HRAS</scope>
    <scope>MUTAGENESIS OF CYS-220; LEU-221; PHE-234; LYS-236; ASP-280; LYS-283; GLN-284; LYS-302 AND LYS-303</scope>
    <scope>INTERACTION WITH RAP1A</scope>
</reference>
<evidence type="ECO:0000250" key="1"/>
<evidence type="ECO:0000250" key="2">
    <source>
        <dbReference type="UniProtKB" id="Q8WWW0"/>
    </source>
</evidence>
<evidence type="ECO:0000255" key="3">
    <source>
        <dbReference type="PROSITE-ProRule" id="PRU00166"/>
    </source>
</evidence>
<evidence type="ECO:0000255" key="4">
    <source>
        <dbReference type="PROSITE-ProRule" id="PRU00226"/>
    </source>
</evidence>
<evidence type="ECO:0000255" key="5">
    <source>
        <dbReference type="PROSITE-ProRule" id="PRU00310"/>
    </source>
</evidence>
<evidence type="ECO:0000256" key="6">
    <source>
        <dbReference type="SAM" id="MobiDB-lite"/>
    </source>
</evidence>
<evidence type="ECO:0000269" key="7">
    <source>
    </source>
</evidence>
<evidence type="ECO:0000269" key="8">
    <source>
    </source>
</evidence>
<evidence type="ECO:0000269" key="9">
    <source>
    </source>
</evidence>
<evidence type="ECO:0000269" key="10">
    <source>
    </source>
</evidence>
<evidence type="ECO:0000303" key="11">
    <source>
    </source>
</evidence>
<evidence type="ECO:0000303" key="12">
    <source>
    </source>
</evidence>
<evidence type="ECO:0000303" key="13">
    <source>
    </source>
</evidence>
<evidence type="ECO:0000305" key="14"/>
<evidence type="ECO:0007744" key="15">
    <source>
    </source>
</evidence>
<evidence type="ECO:0007829" key="16">
    <source>
        <dbReference type="PDB" id="1RFH"/>
    </source>
</evidence>
<evidence type="ECO:0007829" key="17">
    <source>
        <dbReference type="PDB" id="2FNF"/>
    </source>
</evidence>
<evidence type="ECO:0007829" key="18">
    <source>
        <dbReference type="PDB" id="2YMY"/>
    </source>
</evidence>
<evidence type="ECO:0007829" key="19">
    <source>
        <dbReference type="PDB" id="3DDC"/>
    </source>
</evidence>
<sequence>MASPAIGQRPYPLLLDPEPPRYLQSLGGTEPPPPARPRRCIPTALIPAAGASEDRGGRRSGRRDPEPTPRDCRHARPVRPGLQPRLRLRPGSHRPRDVRSIFEQPQDPRVLAERGEGHRFVELALRGGPGWCDLCGREVLRQALRCANCKFTCHSECRSLIQLDCRQKGGPALDRRSPESTLTPTLNQNVCKAVEETQHPPTIQEIKQKIDSYNSREKHCLGMKLSEDGTYTGFIKVHLKLRRPVTVPAGIRPQSIYDAIKEVNPAATTDKRTSFYLPLDAIKQLHISSTTTVSEVIQGLLKKFMVVDNPQKFALFKRIHKDGQVLFQKLSIADYPLYLRLLAGPDTDVLSFVLKENETGEVEWDAFSIPELQNFLTILEKEEQDKIHQLQKKYNKFRQKLEEALRESQGKPG</sequence>
<name>RASF5_MOUSE</name>
<dbReference type="EMBL" id="AF053959">
    <property type="protein sequence ID" value="AAC08580.1"/>
    <property type="molecule type" value="mRNA"/>
</dbReference>
<dbReference type="EMBL" id="AY261333">
    <property type="protein sequence ID" value="AAP83361.1"/>
    <property type="molecule type" value="mRNA"/>
</dbReference>
<dbReference type="EMBL" id="AK131147">
    <property type="protein sequence ID" value="BAD21397.1"/>
    <property type="status" value="ALT_INIT"/>
    <property type="molecule type" value="mRNA"/>
</dbReference>
<dbReference type="EMBL" id="AK088751">
    <property type="protein sequence ID" value="BAC40546.1"/>
    <property type="molecule type" value="mRNA"/>
</dbReference>
<dbReference type="EMBL" id="AK155534">
    <property type="protein sequence ID" value="BAE33312.1"/>
    <property type="molecule type" value="mRNA"/>
</dbReference>
<dbReference type="EMBL" id="AK155869">
    <property type="protein sequence ID" value="BAE33472.1"/>
    <property type="molecule type" value="mRNA"/>
</dbReference>
<dbReference type="EMBL" id="BC089605">
    <property type="protein sequence ID" value="AAH89605.1"/>
    <property type="molecule type" value="mRNA"/>
</dbReference>
<dbReference type="CCDS" id="CCDS15268.1">
    <molecule id="Q5EBH1-1"/>
</dbReference>
<dbReference type="CCDS" id="CCDS78675.1">
    <molecule id="Q5EBH1-2"/>
</dbReference>
<dbReference type="RefSeq" id="NP_001298023.1">
    <molecule id="Q5EBH1-2"/>
    <property type="nucleotide sequence ID" value="NM_001311094.2"/>
</dbReference>
<dbReference type="RefSeq" id="NP_061220.2">
    <molecule id="Q5EBH1-1"/>
    <property type="nucleotide sequence ID" value="NM_018750.4"/>
</dbReference>
<dbReference type="PDB" id="1RFH">
    <property type="method" value="NMR"/>
    <property type="chains" value="A=108-166"/>
</dbReference>
<dbReference type="PDB" id="2FNF">
    <property type="method" value="NMR"/>
    <property type="chains" value="X=95-166"/>
</dbReference>
<dbReference type="PDB" id="2YMY">
    <property type="method" value="X-ray"/>
    <property type="resolution" value="1.69 A"/>
    <property type="chains" value="A/B=370-413"/>
</dbReference>
<dbReference type="PDB" id="3DDC">
    <property type="method" value="X-ray"/>
    <property type="resolution" value="1.80 A"/>
    <property type="chains" value="B=200-357"/>
</dbReference>
<dbReference type="PDBsum" id="1RFH"/>
<dbReference type="PDBsum" id="2FNF"/>
<dbReference type="PDBsum" id="2YMY"/>
<dbReference type="PDBsum" id="3DDC"/>
<dbReference type="BMRB" id="Q5EBH1"/>
<dbReference type="SMR" id="Q5EBH1"/>
<dbReference type="BioGRID" id="207620">
    <property type="interactions" value="2"/>
</dbReference>
<dbReference type="DIP" id="DIP-29107N"/>
<dbReference type="FunCoup" id="Q5EBH1">
    <property type="interactions" value="1779"/>
</dbReference>
<dbReference type="IntAct" id="Q5EBH1">
    <property type="interactions" value="19"/>
</dbReference>
<dbReference type="MINT" id="Q5EBH1"/>
<dbReference type="STRING" id="10090.ENSMUSP00000027688"/>
<dbReference type="GlyGen" id="Q5EBH1">
    <property type="glycosylation" value="1 site"/>
</dbReference>
<dbReference type="iPTMnet" id="Q5EBH1"/>
<dbReference type="PhosphoSitePlus" id="Q5EBH1"/>
<dbReference type="SwissPalm" id="Q5EBH1"/>
<dbReference type="jPOST" id="Q5EBH1"/>
<dbReference type="PaxDb" id="10090-ENSMUSP00000027688"/>
<dbReference type="ProteomicsDB" id="253172">
    <molecule id="Q5EBH1-1"/>
</dbReference>
<dbReference type="ProteomicsDB" id="253173">
    <molecule id="Q5EBH1-2"/>
</dbReference>
<dbReference type="Pumba" id="Q5EBH1"/>
<dbReference type="Antibodypedia" id="73646">
    <property type="antibodies" value="291 antibodies from 31 providers"/>
</dbReference>
<dbReference type="DNASU" id="54354"/>
<dbReference type="Ensembl" id="ENSMUST00000027688.15">
    <molecule id="Q5EBH1-1"/>
    <property type="protein sequence ID" value="ENSMUSP00000027688.9"/>
    <property type="gene ID" value="ENSMUSG00000026430.17"/>
</dbReference>
<dbReference type="Ensembl" id="ENSMUST00000068564.15">
    <molecule id="Q5EBH1-2"/>
    <property type="protein sequence ID" value="ENSMUSP00000067011.9"/>
    <property type="gene ID" value="ENSMUSG00000026430.17"/>
</dbReference>
<dbReference type="GeneID" id="54354"/>
<dbReference type="KEGG" id="mmu:54354"/>
<dbReference type="UCSC" id="uc007cnc.1">
    <molecule id="Q5EBH1-2"/>
    <property type="organism name" value="mouse"/>
</dbReference>
<dbReference type="UCSC" id="uc007cnd.1">
    <molecule id="Q5EBH1-1"/>
    <property type="organism name" value="mouse"/>
</dbReference>
<dbReference type="AGR" id="MGI:1926375"/>
<dbReference type="CTD" id="83593"/>
<dbReference type="MGI" id="MGI:1926375">
    <property type="gene designation" value="Rassf5"/>
</dbReference>
<dbReference type="VEuPathDB" id="HostDB:ENSMUSG00000026430"/>
<dbReference type="eggNOG" id="KOG4239">
    <property type="taxonomic scope" value="Eukaryota"/>
</dbReference>
<dbReference type="GeneTree" id="ENSGT00940000159288"/>
<dbReference type="HOGENOM" id="CLU_045544_1_0_1"/>
<dbReference type="InParanoid" id="Q5EBH1"/>
<dbReference type="OrthoDB" id="74314at2759"/>
<dbReference type="PhylomeDB" id="Q5EBH1"/>
<dbReference type="TreeFam" id="TF319243"/>
<dbReference type="BioGRID-ORCS" id="54354">
    <property type="hits" value="2 hits in 77 CRISPR screens"/>
</dbReference>
<dbReference type="ChiTaRS" id="Rassf5">
    <property type="organism name" value="mouse"/>
</dbReference>
<dbReference type="EvolutionaryTrace" id="Q5EBH1"/>
<dbReference type="PRO" id="PR:Q5EBH1"/>
<dbReference type="Proteomes" id="UP000000589">
    <property type="component" value="Chromosome 1"/>
</dbReference>
<dbReference type="RNAct" id="Q5EBH1">
    <property type="molecule type" value="protein"/>
</dbReference>
<dbReference type="Bgee" id="ENSMUSG00000026430">
    <property type="expression patterns" value="Expressed in peripheral lymph node and 237 other cell types or tissues"/>
</dbReference>
<dbReference type="ExpressionAtlas" id="Q5EBH1">
    <property type="expression patterns" value="baseline and differential"/>
</dbReference>
<dbReference type="GO" id="GO:0005737">
    <property type="term" value="C:cytoplasm"/>
    <property type="evidence" value="ECO:0007669"/>
    <property type="project" value="UniProtKB-SubCell"/>
</dbReference>
<dbReference type="GO" id="GO:0005874">
    <property type="term" value="C:microtubule"/>
    <property type="evidence" value="ECO:0007669"/>
    <property type="project" value="UniProtKB-KW"/>
</dbReference>
<dbReference type="GO" id="GO:0005634">
    <property type="term" value="C:nucleus"/>
    <property type="evidence" value="ECO:0000314"/>
    <property type="project" value="MGI"/>
</dbReference>
<dbReference type="GO" id="GO:0008270">
    <property type="term" value="F:zinc ion binding"/>
    <property type="evidence" value="ECO:0007669"/>
    <property type="project" value="UniProtKB-KW"/>
</dbReference>
<dbReference type="GO" id="GO:0006915">
    <property type="term" value="P:apoptotic process"/>
    <property type="evidence" value="ECO:0007669"/>
    <property type="project" value="UniProtKB-KW"/>
</dbReference>
<dbReference type="GO" id="GO:0046651">
    <property type="term" value="P:lymphocyte proliferation"/>
    <property type="evidence" value="ECO:0000315"/>
    <property type="project" value="MGI"/>
</dbReference>
<dbReference type="GO" id="GO:0050672">
    <property type="term" value="P:negative regulation of lymphocyte proliferation"/>
    <property type="evidence" value="ECO:0000315"/>
    <property type="project" value="MGI"/>
</dbReference>
<dbReference type="GO" id="GO:0031398">
    <property type="term" value="P:positive regulation of protein ubiquitination"/>
    <property type="evidence" value="ECO:0000315"/>
    <property type="project" value="MGI"/>
</dbReference>
<dbReference type="GO" id="GO:1900180">
    <property type="term" value="P:regulation of protein localization to nucleus"/>
    <property type="evidence" value="ECO:0000315"/>
    <property type="project" value="MGI"/>
</dbReference>
<dbReference type="GO" id="GO:0007165">
    <property type="term" value="P:signal transduction"/>
    <property type="evidence" value="ECO:0007669"/>
    <property type="project" value="InterPro"/>
</dbReference>
<dbReference type="CDD" id="cd20886">
    <property type="entry name" value="C1_RASSF5"/>
    <property type="match status" value="1"/>
</dbReference>
<dbReference type="CDD" id="cd17220">
    <property type="entry name" value="RA_RASSF5"/>
    <property type="match status" value="1"/>
</dbReference>
<dbReference type="CDD" id="cd21892">
    <property type="entry name" value="SARAH_RASSF5"/>
    <property type="match status" value="1"/>
</dbReference>
<dbReference type="FunFam" id="3.10.20.90:FF:000048">
    <property type="entry name" value="Ras association domain family member 1"/>
    <property type="match status" value="1"/>
</dbReference>
<dbReference type="FunFam" id="1.20.5.110:FF:000032">
    <property type="entry name" value="Ras association domain family member 5"/>
    <property type="match status" value="1"/>
</dbReference>
<dbReference type="Gene3D" id="1.20.5.110">
    <property type="match status" value="1"/>
</dbReference>
<dbReference type="Gene3D" id="3.30.60.20">
    <property type="match status" value="1"/>
</dbReference>
<dbReference type="Gene3D" id="3.10.20.90">
    <property type="entry name" value="Phosphatidylinositol 3-kinase Catalytic Subunit, Chain A, domain 1"/>
    <property type="match status" value="1"/>
</dbReference>
<dbReference type="InterPro" id="IPR046349">
    <property type="entry name" value="C1-like_sf"/>
</dbReference>
<dbReference type="InterPro" id="IPR002219">
    <property type="entry name" value="PE/DAG-bd"/>
</dbReference>
<dbReference type="InterPro" id="IPR000159">
    <property type="entry name" value="RA_dom"/>
</dbReference>
<dbReference type="InterPro" id="IPR033614">
    <property type="entry name" value="RASSF1-6"/>
</dbReference>
<dbReference type="InterPro" id="IPR033623">
    <property type="entry name" value="RASSF5_RA"/>
</dbReference>
<dbReference type="InterPro" id="IPR011524">
    <property type="entry name" value="SARAH_dom"/>
</dbReference>
<dbReference type="InterPro" id="IPR029071">
    <property type="entry name" value="Ubiquitin-like_domsf"/>
</dbReference>
<dbReference type="PANTHER" id="PTHR22738:SF9">
    <property type="entry name" value="RAS ASSOCIATION DOMAIN-CONTAINING PROTEIN 5"/>
    <property type="match status" value="1"/>
</dbReference>
<dbReference type="PANTHER" id="PTHR22738">
    <property type="entry name" value="RASSF"/>
    <property type="match status" value="1"/>
</dbReference>
<dbReference type="Pfam" id="PF00130">
    <property type="entry name" value="C1_1"/>
    <property type="match status" value="1"/>
</dbReference>
<dbReference type="Pfam" id="PF16517">
    <property type="entry name" value="Nore1-SARAH"/>
    <property type="match status" value="1"/>
</dbReference>
<dbReference type="Pfam" id="PF00788">
    <property type="entry name" value="RA"/>
    <property type="match status" value="1"/>
</dbReference>
<dbReference type="SMART" id="SM00109">
    <property type="entry name" value="C1"/>
    <property type="match status" value="1"/>
</dbReference>
<dbReference type="SMART" id="SM00314">
    <property type="entry name" value="RA"/>
    <property type="match status" value="1"/>
</dbReference>
<dbReference type="SUPFAM" id="SSF57889">
    <property type="entry name" value="Cysteine-rich domain"/>
    <property type="match status" value="1"/>
</dbReference>
<dbReference type="SUPFAM" id="SSF54236">
    <property type="entry name" value="Ubiquitin-like"/>
    <property type="match status" value="1"/>
</dbReference>
<dbReference type="PROSITE" id="PS50200">
    <property type="entry name" value="RA"/>
    <property type="match status" value="1"/>
</dbReference>
<dbReference type="PROSITE" id="PS50951">
    <property type="entry name" value="SARAH"/>
    <property type="match status" value="1"/>
</dbReference>
<dbReference type="PROSITE" id="PS00479">
    <property type="entry name" value="ZF_DAG_PE_1"/>
    <property type="match status" value="1"/>
</dbReference>
<dbReference type="PROSITE" id="PS50081">
    <property type="entry name" value="ZF_DAG_PE_2"/>
    <property type="match status" value="1"/>
</dbReference>
<gene>
    <name type="primary">Rassf5</name>
    <name type="synonym">Nore1</name>
    <name type="synonym">Rapl</name>
</gene>
<keyword id="KW-0002">3D-structure</keyword>
<keyword id="KW-0025">Alternative splicing</keyword>
<keyword id="KW-0053">Apoptosis</keyword>
<keyword id="KW-0963">Cytoplasm</keyword>
<keyword id="KW-0206">Cytoskeleton</keyword>
<keyword id="KW-0479">Metal-binding</keyword>
<keyword id="KW-0493">Microtubule</keyword>
<keyword id="KW-0597">Phosphoprotein</keyword>
<keyword id="KW-1185">Reference proteome</keyword>
<keyword id="KW-0043">Tumor suppressor</keyword>
<keyword id="KW-0862">Zinc</keyword>
<keyword id="KW-0863">Zinc-finger</keyword>
<comment type="function">
    <text evidence="1 8">Potential tumor suppressor. Seems to be involved in lymphocyte adhesion by linking RAP1A activation upon T-cell receptor or chemokine stimulation to integrin activation. Isoform 2 stimulates lymphocyte polarization and the patch-like distribution of ITGAL/LFA-1, resulting in an enhanced adhesion to ICAM1. Together with RAP1A may participate in regulation of microtubule growth. The association of isoform 2 with activated RAP1A is required for directional movement of endothelial cells during wound healing (By similarity). May be involved in regulation of Ras apoptotic function. The RASSF5-STK4/MST1 complex may mediate HRAS and KRAS induced apoptosis.</text>
</comment>
<comment type="subunit">
    <text evidence="2 7 8 9 10">Interacts directly with activated HRAS; a RASSF5-STK4/MST1 complex probably associates with activated HRAS (PubMed:11857081, PubMed:11864565, PubMed:18596699, PubMed:9488663). Interacts with KRAS (PubMed:11857081, PubMed:11864565). Probably interacts with Ras-like GTPases RRAS, MRAS, RAP1B, RAP2A and RALA (PubMed:11857081). Interacts with RRAS2 (By similarity). Can self-associate (PubMed:11857081). Interacts with RSSF1 isoform A (PubMed:11857081). The RSSF1 isoform A-RSSF5 heterodimer probably mediates the association of RSSF1 with HRAS (PubMed:11857081, PubMed:11864565). Isoform 2 interacts with activated RAP1A and ITGAL/LFA-1 (By similarity). Binds STK4/MST1, inhibiting STK4/MST1 autoactivation (PubMed:11864565).</text>
</comment>
<comment type="interaction">
    <interactant intactId="EBI-960530">
        <id>Q5EBH1</id>
    </interactant>
    <interactant intactId="EBI-692945">
        <id>O88904</id>
        <label>Hipk1</label>
    </interactant>
    <organismsDiffer>false</organismsDiffer>
    <experiments>5</experiments>
</comment>
<comment type="interaction">
    <interactant intactId="EBI-960530">
        <id>Q5EBH1</id>
    </interactant>
    <interactant intactId="EBI-400273">
        <id>Q61411</id>
        <label>Hras</label>
    </interactant>
    <organismsDiffer>false</organismsDiffer>
    <experiments>2</experiments>
</comment>
<comment type="interaction">
    <interactant intactId="EBI-960530">
        <id>Q5EBH1</id>
    </interactant>
    <interactant intactId="EBI-641788">
        <id>P23804</id>
        <label>Mdm2</label>
    </interactant>
    <organismsDiffer>false</organismsDiffer>
    <experiments>3</experiments>
</comment>
<comment type="interaction">
    <interactant intactId="EBI-960530">
        <id>Q5EBH1</id>
    </interactant>
    <interactant intactId="EBI-1181352">
        <id>Q9JI11</id>
        <label>Stk4</label>
    </interactant>
    <organismsDiffer>false</organismsDiffer>
    <experiments>3</experiments>
</comment>
<comment type="interaction">
    <interactant intactId="EBI-960530">
        <id>Q5EBH1</id>
    </interactant>
    <interactant intactId="EBI-350145">
        <id>P01112</id>
        <label>HRAS</label>
    </interactant>
    <organismsDiffer>true</organismsDiffer>
    <experiments>13</experiments>
</comment>
<comment type="interaction">
    <interactant intactId="EBI-960530">
        <id>Q5EBH1</id>
    </interactant>
    <interactant intactId="EBI-491414">
        <id>P62834</id>
        <label>RAP1A</label>
    </interactant>
    <organismsDiffer>true</organismsDiffer>
    <experiments>3</experiments>
</comment>
<comment type="interaction">
    <interactant intactId="EBI-960543">
        <id>Q5EBH1-1</id>
    </interactant>
    <interactant intactId="EBI-350145">
        <id>P01112</id>
        <label>HRAS</label>
    </interactant>
    <organismsDiffer>true</organismsDiffer>
    <experiments>3</experiments>
</comment>
<comment type="subcellular location">
    <subcellularLocation>
        <location evidence="1">Cytoplasm</location>
    </subcellularLocation>
    <subcellularLocation>
        <location evidence="1">Cytoplasm</location>
        <location evidence="1">Cytoskeleton</location>
    </subcellularLocation>
    <text evidence="1">Isoform 2 is mainly located in the perinuclear region of unstimulated primary T-cells. Upon stimulation translocates to the leading edge and colocalizes with ITGAL/LFA-1 in the peripheral zone of the immunological synapse. Isoform 2 is localized to growing microtubules in vascular endothelial cells and is dissociated from microtubules by activated RAP1A (By similarity).</text>
</comment>
<comment type="alternative products">
    <event type="alternative splicing"/>
    <isoform>
        <id>Q5EBH1-1</id>
        <name>1</name>
        <sequence type="displayed"/>
    </isoform>
    <isoform>
        <id>Q5EBH1-2</id>
        <name>2</name>
        <sequence type="described" ref="VSP_019368 VSP_019369"/>
    </isoform>
</comment>
<comment type="sequence caution" evidence="14">
    <conflict type="erroneous initiation">
        <sequence resource="EMBL-CDS" id="BAD21397"/>
    </conflict>
    <text>Extended N-terminus.</text>
</comment>
<proteinExistence type="evidence at protein level"/>
<organism>
    <name type="scientific">Mus musculus</name>
    <name type="common">Mouse</name>
    <dbReference type="NCBI Taxonomy" id="10090"/>
    <lineage>
        <taxon>Eukaryota</taxon>
        <taxon>Metazoa</taxon>
        <taxon>Chordata</taxon>
        <taxon>Craniata</taxon>
        <taxon>Vertebrata</taxon>
        <taxon>Euteleostomi</taxon>
        <taxon>Mammalia</taxon>
        <taxon>Eutheria</taxon>
        <taxon>Euarchontoglires</taxon>
        <taxon>Glires</taxon>
        <taxon>Rodentia</taxon>
        <taxon>Myomorpha</taxon>
        <taxon>Muroidea</taxon>
        <taxon>Muridae</taxon>
        <taxon>Murinae</taxon>
        <taxon>Mus</taxon>
        <taxon>Mus</taxon>
    </lineage>
</organism>